<keyword id="KW-0249">Electron transport</keyword>
<keyword id="KW-0472">Membrane</keyword>
<keyword id="KW-0496">Mitochondrion</keyword>
<keyword id="KW-0999">Mitochondrion inner membrane</keyword>
<keyword id="KW-0520">NAD</keyword>
<keyword id="KW-1185">Reference proteome</keyword>
<keyword id="KW-0679">Respiratory chain</keyword>
<keyword id="KW-1278">Translocase</keyword>
<keyword id="KW-0812">Transmembrane</keyword>
<keyword id="KW-1133">Transmembrane helix</keyword>
<keyword id="KW-0813">Transport</keyword>
<keyword id="KW-0830">Ubiquinone</keyword>
<protein>
    <recommendedName>
        <fullName>NADH-ubiquinone oxidoreductase chain 4L</fullName>
        <ecNumber>7.1.1.2</ecNumber>
    </recommendedName>
    <alternativeName>
        <fullName>NADH dehydrogenase subunit 4L</fullName>
    </alternativeName>
</protein>
<organism>
    <name type="scientific">Equus caballus</name>
    <name type="common">Horse</name>
    <dbReference type="NCBI Taxonomy" id="9796"/>
    <lineage>
        <taxon>Eukaryota</taxon>
        <taxon>Metazoa</taxon>
        <taxon>Chordata</taxon>
        <taxon>Craniata</taxon>
        <taxon>Vertebrata</taxon>
        <taxon>Euteleostomi</taxon>
        <taxon>Mammalia</taxon>
        <taxon>Eutheria</taxon>
        <taxon>Laurasiatheria</taxon>
        <taxon>Perissodactyla</taxon>
        <taxon>Equidae</taxon>
        <taxon>Equus</taxon>
    </lineage>
</organism>
<geneLocation type="mitochondrion"/>
<reference key="1">
    <citation type="journal article" date="1994" name="Gene">
        <title>The complete mitochondrial DNA sequence of the horse, Equus caballus: extensive heteroplasmy of the control region.</title>
        <authorList>
            <person name="Xu X."/>
            <person name="Arnason U."/>
        </authorList>
    </citation>
    <scope>NUCLEOTIDE SEQUENCE [LARGE SCALE GENOMIC DNA]</scope>
    <source>
        <strain evidence="5">Thoroughbred</strain>
    </source>
</reference>
<name>NU4LM_HORSE</name>
<evidence type="ECO:0000250" key="1">
    <source>
        <dbReference type="UniProtKB" id="P03901"/>
    </source>
</evidence>
<evidence type="ECO:0000250" key="2">
    <source>
        <dbReference type="UniProtKB" id="P03902"/>
    </source>
</evidence>
<evidence type="ECO:0000255" key="3"/>
<evidence type="ECO:0000305" key="4"/>
<evidence type="ECO:0000312" key="5">
    <source>
        <dbReference type="Proteomes" id="UP000002281"/>
    </source>
</evidence>
<proteinExistence type="inferred from homology"/>
<dbReference type="EC" id="7.1.1.2"/>
<dbReference type="EMBL" id="X79547">
    <property type="protein sequence ID" value="CAA56087.1"/>
    <property type="molecule type" value="Genomic_DNA"/>
</dbReference>
<dbReference type="PIR" id="T11865">
    <property type="entry name" value="T11865"/>
</dbReference>
<dbReference type="RefSeq" id="NP_007168.1">
    <property type="nucleotide sequence ID" value="NC_001640.1"/>
</dbReference>
<dbReference type="SMR" id="P48658"/>
<dbReference type="FunCoup" id="P48658">
    <property type="interactions" value="134"/>
</dbReference>
<dbReference type="STRING" id="9796.ENSECAP00000023110"/>
<dbReference type="PaxDb" id="9796-ENSECAP00000023110"/>
<dbReference type="Ensembl" id="ENSECAT00000029855.1">
    <property type="protein sequence ID" value="ENSECAP00000023110.1"/>
    <property type="gene ID" value="ENSECAG00000027691.1"/>
</dbReference>
<dbReference type="KEGG" id="ecb:807851"/>
<dbReference type="VGNC" id="VGNC:99802">
    <property type="gene designation" value="MT-ND4L"/>
</dbReference>
<dbReference type="GeneTree" id="ENSGT00390000004755"/>
<dbReference type="HOGENOM" id="CLU_182394_0_0_1"/>
<dbReference type="InParanoid" id="P48658"/>
<dbReference type="OMA" id="MYRSHLM"/>
<dbReference type="OrthoDB" id="6146597at2759"/>
<dbReference type="Proteomes" id="UP000002281">
    <property type="component" value="Mitochondrion"/>
</dbReference>
<dbReference type="Bgee" id="ENSECAG00000027691">
    <property type="expression patterns" value="Expressed in prefrontal cortex and 23 other cell types or tissues"/>
</dbReference>
<dbReference type="GO" id="GO:0005743">
    <property type="term" value="C:mitochondrial inner membrane"/>
    <property type="evidence" value="ECO:0000250"/>
    <property type="project" value="UniProtKB"/>
</dbReference>
<dbReference type="GO" id="GO:0045271">
    <property type="term" value="C:respiratory chain complex I"/>
    <property type="evidence" value="ECO:0000250"/>
    <property type="project" value="UniProtKB"/>
</dbReference>
<dbReference type="GO" id="GO:0008137">
    <property type="term" value="F:NADH dehydrogenase (ubiquinone) activity"/>
    <property type="evidence" value="ECO:0000250"/>
    <property type="project" value="UniProtKB"/>
</dbReference>
<dbReference type="GO" id="GO:0042773">
    <property type="term" value="P:ATP synthesis coupled electron transport"/>
    <property type="evidence" value="ECO:0007669"/>
    <property type="project" value="InterPro"/>
</dbReference>
<dbReference type="FunFam" id="1.10.287.3510:FF:000002">
    <property type="entry name" value="NADH-ubiquinone oxidoreductase chain 4L"/>
    <property type="match status" value="1"/>
</dbReference>
<dbReference type="Gene3D" id="1.10.287.3510">
    <property type="match status" value="1"/>
</dbReference>
<dbReference type="InterPro" id="IPR001133">
    <property type="entry name" value="NADH_UbQ_OxRdtase_chain4L/K"/>
</dbReference>
<dbReference type="InterPro" id="IPR039428">
    <property type="entry name" value="NUOK/Mnh_C1-like"/>
</dbReference>
<dbReference type="PANTHER" id="PTHR11434:SF0">
    <property type="entry name" value="NADH-UBIQUINONE OXIDOREDUCTASE CHAIN 4L"/>
    <property type="match status" value="1"/>
</dbReference>
<dbReference type="PANTHER" id="PTHR11434">
    <property type="entry name" value="NADH-UBIQUINONE OXIDOREDUCTASE SUBUNIT ND4L"/>
    <property type="match status" value="1"/>
</dbReference>
<dbReference type="Pfam" id="PF00420">
    <property type="entry name" value="Oxidored_q2"/>
    <property type="match status" value="1"/>
</dbReference>
<sequence length="98" mass="10868">MSLVHINIFLAFTVSLVGLLMYRSHLMSSLLCLEGMMLSLFVMATMMVLNTHFTLASMMPIILLVFAACERALGLSLLVMVSNTYGVDHVQNLNLLQC</sequence>
<comment type="function">
    <text evidence="1">Core subunit of the mitochondrial membrane respiratory chain NADH dehydrogenase (Complex I) which catalyzes electron transfer from NADH through the respiratory chain, using ubiquinone as an electron acceptor. Part of the enzyme membrane arm which is embedded in the lipid bilayer and involved in proton translocation.</text>
</comment>
<comment type="catalytic activity">
    <reaction evidence="1">
        <text>a ubiquinone + NADH + 5 H(+)(in) = a ubiquinol + NAD(+) + 4 H(+)(out)</text>
        <dbReference type="Rhea" id="RHEA:29091"/>
        <dbReference type="Rhea" id="RHEA-COMP:9565"/>
        <dbReference type="Rhea" id="RHEA-COMP:9566"/>
        <dbReference type="ChEBI" id="CHEBI:15378"/>
        <dbReference type="ChEBI" id="CHEBI:16389"/>
        <dbReference type="ChEBI" id="CHEBI:17976"/>
        <dbReference type="ChEBI" id="CHEBI:57540"/>
        <dbReference type="ChEBI" id="CHEBI:57945"/>
        <dbReference type="EC" id="7.1.1.2"/>
    </reaction>
    <physiologicalReaction direction="left-to-right" evidence="1">
        <dbReference type="Rhea" id="RHEA:29092"/>
    </physiologicalReaction>
</comment>
<comment type="subunit">
    <text evidence="2">Core subunit of respiratory chain NADH dehydrogenase (Complex I) which is composed of 45 different subunits.</text>
</comment>
<comment type="subcellular location">
    <subcellularLocation>
        <location evidence="2">Mitochondrion inner membrane</location>
        <topology evidence="3">Multi-pass membrane protein</topology>
    </subcellularLocation>
</comment>
<comment type="similarity">
    <text evidence="4">Belongs to the complex I subunit 4L family.</text>
</comment>
<gene>
    <name type="primary">MT-ND4L</name>
    <name type="synonym">MTND4L</name>
    <name type="synonym">NADH4L</name>
    <name type="synonym">ND4L</name>
</gene>
<feature type="chain" id="PRO_0000118430" description="NADH-ubiquinone oxidoreductase chain 4L">
    <location>
        <begin position="1"/>
        <end position="98"/>
    </location>
</feature>
<feature type="transmembrane region" description="Helical" evidence="3">
    <location>
        <begin position="1"/>
        <end position="21"/>
    </location>
</feature>
<feature type="transmembrane region" description="Helical" evidence="3">
    <location>
        <begin position="25"/>
        <end position="45"/>
    </location>
</feature>
<feature type="transmembrane region" description="Helical" evidence="3">
    <location>
        <begin position="59"/>
        <end position="81"/>
    </location>
</feature>
<accession>P48658</accession>